<name>RS26_STENO</name>
<proteinExistence type="inferred from homology"/>
<comment type="similarity">
    <text evidence="1">Belongs to the eukaryotic ribosomal protein eS26 family.</text>
</comment>
<protein>
    <recommendedName>
        <fullName evidence="1">Small ribosomal subunit protein eS26</fullName>
    </recommendedName>
    <alternativeName>
        <fullName>40S ribosomal protein S26</fullName>
    </alternativeName>
</protein>
<accession>Q9BHU1</accession>
<keyword id="KW-0687">Ribonucleoprotein</keyword>
<keyword id="KW-0689">Ribosomal protein</keyword>
<organism>
    <name type="scientific">Sterkiella nova</name>
    <name type="common">Ciliate</name>
    <name type="synonym">Oxytricha nova</name>
    <dbReference type="NCBI Taxonomy" id="200597"/>
    <lineage>
        <taxon>Eukaryota</taxon>
        <taxon>Sar</taxon>
        <taxon>Alveolata</taxon>
        <taxon>Ciliophora</taxon>
        <taxon>Intramacronucleata</taxon>
        <taxon>Spirotrichea</taxon>
        <taxon>Stichotrichia</taxon>
        <taxon>Sporadotrichida</taxon>
        <taxon>Oxytrichidae</taxon>
        <taxon>Stylonychinae</taxon>
        <taxon>Sterkiella</taxon>
    </lineage>
</organism>
<reference key="1">
    <citation type="journal article" date="2002" name="Protist">
        <title>A simple and rapid PCR-based method to isolate complete small macronuclear minichromosomes from hypotrich ciliates: 5S rDNA and S26 ribosomal protein gene of Oxytricha (Sterkiella) nova.</title>
        <authorList>
            <person name="Callejas S."/>
            <person name="Gutierrez J.C."/>
        </authorList>
    </citation>
    <scope>NUCLEOTIDE SEQUENCE [GENOMIC DNA]</scope>
</reference>
<gene>
    <name type="primary">RPS26</name>
</gene>
<dbReference type="EMBL" id="AJ305329">
    <property type="protein sequence ID" value="CAC34796.1"/>
    <property type="molecule type" value="Genomic_DNA"/>
</dbReference>
<dbReference type="SMR" id="Q9BHU1"/>
<dbReference type="GO" id="GO:0022627">
    <property type="term" value="C:cytosolic small ribosomal subunit"/>
    <property type="evidence" value="ECO:0007669"/>
    <property type="project" value="TreeGrafter"/>
</dbReference>
<dbReference type="GO" id="GO:0003729">
    <property type="term" value="F:mRNA binding"/>
    <property type="evidence" value="ECO:0007669"/>
    <property type="project" value="TreeGrafter"/>
</dbReference>
<dbReference type="GO" id="GO:0003735">
    <property type="term" value="F:structural constituent of ribosome"/>
    <property type="evidence" value="ECO:0007669"/>
    <property type="project" value="InterPro"/>
</dbReference>
<dbReference type="GO" id="GO:0006412">
    <property type="term" value="P:translation"/>
    <property type="evidence" value="ECO:0007669"/>
    <property type="project" value="InterPro"/>
</dbReference>
<dbReference type="Gene3D" id="3.30.1740.20">
    <property type="entry name" value="Ribosomal protein S26e"/>
    <property type="match status" value="1"/>
</dbReference>
<dbReference type="InterPro" id="IPR000892">
    <property type="entry name" value="Ribosomal_eS26"/>
</dbReference>
<dbReference type="InterPro" id="IPR047864">
    <property type="entry name" value="Ribosomal_eS26_CS"/>
</dbReference>
<dbReference type="InterPro" id="IPR038551">
    <property type="entry name" value="Ribosomal_eS26_sf"/>
</dbReference>
<dbReference type="PANTHER" id="PTHR12538">
    <property type="entry name" value="40S RIBOSOMAL PROTEIN S26"/>
    <property type="match status" value="1"/>
</dbReference>
<dbReference type="PANTHER" id="PTHR12538:SF0">
    <property type="entry name" value="40S RIBOSOMAL PROTEIN S26"/>
    <property type="match status" value="1"/>
</dbReference>
<dbReference type="Pfam" id="PF01283">
    <property type="entry name" value="Ribosomal_S26e"/>
    <property type="match status" value="1"/>
</dbReference>
<dbReference type="PROSITE" id="PS00733">
    <property type="entry name" value="RIBOSOMAL_S26E"/>
    <property type="match status" value="1"/>
</dbReference>
<sequence>MPSKRRNNGRNKKNKGHADTVRCTNCGRVVSKDKAIKRFQQRNMVDASSKRDIQENYAYAQSDFTMPKIYVKLSYCVSCAIHARIVRVRSVEDRRHRYTTKLRQHVRPEAQTGNASLPLALLPKI</sequence>
<feature type="chain" id="PRO_0000204521" description="Small ribosomal subunit protein eS26">
    <location>
        <begin position="1"/>
        <end position="125"/>
    </location>
</feature>
<evidence type="ECO:0000305" key="1"/>